<name>PROA_METEP</name>
<evidence type="ECO:0000255" key="1">
    <source>
        <dbReference type="HAMAP-Rule" id="MF_00412"/>
    </source>
</evidence>
<accession>A9W6Q2</accession>
<organism>
    <name type="scientific">Methylorubrum extorquens (strain PA1)</name>
    <name type="common">Methylobacterium extorquens</name>
    <dbReference type="NCBI Taxonomy" id="419610"/>
    <lineage>
        <taxon>Bacteria</taxon>
        <taxon>Pseudomonadati</taxon>
        <taxon>Pseudomonadota</taxon>
        <taxon>Alphaproteobacteria</taxon>
        <taxon>Hyphomicrobiales</taxon>
        <taxon>Methylobacteriaceae</taxon>
        <taxon>Methylorubrum</taxon>
    </lineage>
</organism>
<proteinExistence type="inferred from homology"/>
<feature type="chain" id="PRO_1000193622" description="Gamma-glutamyl phosphate reductase">
    <location>
        <begin position="1"/>
        <end position="432"/>
    </location>
</feature>
<keyword id="KW-0028">Amino-acid biosynthesis</keyword>
<keyword id="KW-0963">Cytoplasm</keyword>
<keyword id="KW-0521">NADP</keyword>
<keyword id="KW-0560">Oxidoreductase</keyword>
<keyword id="KW-0641">Proline biosynthesis</keyword>
<sequence length="432" mass="44544">MPVLNLKSDLADADDLETLMAGIGRRARAAGRAMALAPAQTKDLGLRAIAEQIRASAPAILRENARDVSAAQAAGLTNAIIDRLTLDEGRVAAIAEAVEKVAGLADPVGRQLAAFERPNGLLIERISVPLGVVGVIFESRPNVTADAGALCLKAGNAAILRAGSDSHRTATAIAAAMSEGLARAGLPADAIQLVPTRDRAAVGLMLTGLGGCVDVIVPRGGRSLVERVQAEAKVPVFAHLDGICHVYVAEGADLGMARSLLLNSKMRRTGICGAAETLLVDAAVAETHLKPLVEALLESGCAVRGDAATQAADPRVSAATDADWRTEYLDAIISAKVVGGLDAAIAHIEANGSHHTDAIITDDTDAAARFLNEVDSAIVTHNASTQFADGGEFGFGAEIGIATGRMHARGPVGVEQLTTFKYRVHGSGQTRP</sequence>
<gene>
    <name evidence="1" type="primary">proA</name>
    <name type="ordered locus">Mext_2868</name>
</gene>
<reference key="1">
    <citation type="submission" date="2007-12" db="EMBL/GenBank/DDBJ databases">
        <title>Complete sequence of Methylobacterium extorquens PA1.</title>
        <authorList>
            <consortium name="US DOE Joint Genome Institute"/>
            <person name="Copeland A."/>
            <person name="Lucas S."/>
            <person name="Lapidus A."/>
            <person name="Barry K."/>
            <person name="Glavina del Rio T."/>
            <person name="Dalin E."/>
            <person name="Tice H."/>
            <person name="Pitluck S."/>
            <person name="Saunders E."/>
            <person name="Brettin T."/>
            <person name="Bruce D."/>
            <person name="Detter J.C."/>
            <person name="Han C."/>
            <person name="Schmutz J."/>
            <person name="Larimer F."/>
            <person name="Land M."/>
            <person name="Hauser L."/>
            <person name="Kyrpides N."/>
            <person name="Kim E."/>
            <person name="Marx C."/>
            <person name="Richardson P."/>
        </authorList>
    </citation>
    <scope>NUCLEOTIDE SEQUENCE [LARGE SCALE GENOMIC DNA]</scope>
    <source>
        <strain>PA1</strain>
    </source>
</reference>
<dbReference type="EC" id="1.2.1.41" evidence="1"/>
<dbReference type="EMBL" id="CP000908">
    <property type="protein sequence ID" value="ABY31258.1"/>
    <property type="molecule type" value="Genomic_DNA"/>
</dbReference>
<dbReference type="RefSeq" id="WP_012254211.1">
    <property type="nucleotide sequence ID" value="NC_010172.1"/>
</dbReference>
<dbReference type="SMR" id="A9W6Q2"/>
<dbReference type="KEGG" id="mex:Mext_2868"/>
<dbReference type="eggNOG" id="COG0014">
    <property type="taxonomic scope" value="Bacteria"/>
</dbReference>
<dbReference type="HOGENOM" id="CLU_030231_0_0_5"/>
<dbReference type="BioCyc" id="MEXT419610:MEXT_RS14455-MONOMER"/>
<dbReference type="UniPathway" id="UPA00098">
    <property type="reaction ID" value="UER00360"/>
</dbReference>
<dbReference type="GO" id="GO:0005737">
    <property type="term" value="C:cytoplasm"/>
    <property type="evidence" value="ECO:0007669"/>
    <property type="project" value="UniProtKB-SubCell"/>
</dbReference>
<dbReference type="GO" id="GO:0004350">
    <property type="term" value="F:glutamate-5-semialdehyde dehydrogenase activity"/>
    <property type="evidence" value="ECO:0007669"/>
    <property type="project" value="UniProtKB-UniRule"/>
</dbReference>
<dbReference type="GO" id="GO:0050661">
    <property type="term" value="F:NADP binding"/>
    <property type="evidence" value="ECO:0007669"/>
    <property type="project" value="InterPro"/>
</dbReference>
<dbReference type="GO" id="GO:0055129">
    <property type="term" value="P:L-proline biosynthetic process"/>
    <property type="evidence" value="ECO:0007669"/>
    <property type="project" value="UniProtKB-UniRule"/>
</dbReference>
<dbReference type="CDD" id="cd07079">
    <property type="entry name" value="ALDH_F18-19_ProA-GPR"/>
    <property type="match status" value="1"/>
</dbReference>
<dbReference type="FunFam" id="3.40.309.10:FF:000006">
    <property type="entry name" value="Gamma-glutamyl phosphate reductase"/>
    <property type="match status" value="1"/>
</dbReference>
<dbReference type="Gene3D" id="3.40.605.10">
    <property type="entry name" value="Aldehyde Dehydrogenase, Chain A, domain 1"/>
    <property type="match status" value="1"/>
</dbReference>
<dbReference type="Gene3D" id="3.40.309.10">
    <property type="entry name" value="Aldehyde Dehydrogenase, Chain A, domain 2"/>
    <property type="match status" value="1"/>
</dbReference>
<dbReference type="HAMAP" id="MF_00412">
    <property type="entry name" value="ProA"/>
    <property type="match status" value="1"/>
</dbReference>
<dbReference type="InterPro" id="IPR016161">
    <property type="entry name" value="Ald_DH/histidinol_DH"/>
</dbReference>
<dbReference type="InterPro" id="IPR016163">
    <property type="entry name" value="Ald_DH_C"/>
</dbReference>
<dbReference type="InterPro" id="IPR016162">
    <property type="entry name" value="Ald_DH_N"/>
</dbReference>
<dbReference type="InterPro" id="IPR015590">
    <property type="entry name" value="Aldehyde_DH_dom"/>
</dbReference>
<dbReference type="InterPro" id="IPR020593">
    <property type="entry name" value="G-glutamylP_reductase_CS"/>
</dbReference>
<dbReference type="InterPro" id="IPR012134">
    <property type="entry name" value="Glu-5-SA_DH"/>
</dbReference>
<dbReference type="InterPro" id="IPR000965">
    <property type="entry name" value="GPR_dom"/>
</dbReference>
<dbReference type="NCBIfam" id="NF001221">
    <property type="entry name" value="PRK00197.1"/>
    <property type="match status" value="1"/>
</dbReference>
<dbReference type="NCBIfam" id="TIGR00407">
    <property type="entry name" value="proA"/>
    <property type="match status" value="1"/>
</dbReference>
<dbReference type="PANTHER" id="PTHR11063:SF8">
    <property type="entry name" value="DELTA-1-PYRROLINE-5-CARBOXYLATE SYNTHASE"/>
    <property type="match status" value="1"/>
</dbReference>
<dbReference type="PANTHER" id="PTHR11063">
    <property type="entry name" value="GLUTAMATE SEMIALDEHYDE DEHYDROGENASE"/>
    <property type="match status" value="1"/>
</dbReference>
<dbReference type="Pfam" id="PF00171">
    <property type="entry name" value="Aldedh"/>
    <property type="match status" value="1"/>
</dbReference>
<dbReference type="PIRSF" id="PIRSF000151">
    <property type="entry name" value="GPR"/>
    <property type="match status" value="1"/>
</dbReference>
<dbReference type="SUPFAM" id="SSF53720">
    <property type="entry name" value="ALDH-like"/>
    <property type="match status" value="1"/>
</dbReference>
<dbReference type="PROSITE" id="PS01223">
    <property type="entry name" value="PROA"/>
    <property type="match status" value="1"/>
</dbReference>
<comment type="function">
    <text evidence="1">Catalyzes the NADPH-dependent reduction of L-glutamate 5-phosphate into L-glutamate 5-semialdehyde and phosphate. The product spontaneously undergoes cyclization to form 1-pyrroline-5-carboxylate.</text>
</comment>
<comment type="catalytic activity">
    <reaction evidence="1">
        <text>L-glutamate 5-semialdehyde + phosphate + NADP(+) = L-glutamyl 5-phosphate + NADPH + H(+)</text>
        <dbReference type="Rhea" id="RHEA:19541"/>
        <dbReference type="ChEBI" id="CHEBI:15378"/>
        <dbReference type="ChEBI" id="CHEBI:43474"/>
        <dbReference type="ChEBI" id="CHEBI:57783"/>
        <dbReference type="ChEBI" id="CHEBI:58066"/>
        <dbReference type="ChEBI" id="CHEBI:58274"/>
        <dbReference type="ChEBI" id="CHEBI:58349"/>
        <dbReference type="EC" id="1.2.1.41"/>
    </reaction>
</comment>
<comment type="pathway">
    <text evidence="1">Amino-acid biosynthesis; L-proline biosynthesis; L-glutamate 5-semialdehyde from L-glutamate: step 2/2.</text>
</comment>
<comment type="subcellular location">
    <subcellularLocation>
        <location evidence="1">Cytoplasm</location>
    </subcellularLocation>
</comment>
<comment type="similarity">
    <text evidence="1">Belongs to the gamma-glutamyl phosphate reductase family.</text>
</comment>
<protein>
    <recommendedName>
        <fullName evidence="1">Gamma-glutamyl phosphate reductase</fullName>
        <shortName evidence="1">GPR</shortName>
        <ecNumber evidence="1">1.2.1.41</ecNumber>
    </recommendedName>
    <alternativeName>
        <fullName evidence="1">Glutamate-5-semialdehyde dehydrogenase</fullName>
    </alternativeName>
    <alternativeName>
        <fullName evidence="1">Glutamyl-gamma-semialdehyde dehydrogenase</fullName>
        <shortName evidence="1">GSA dehydrogenase</shortName>
    </alternativeName>
</protein>